<comment type="function">
    <text evidence="2">Positively regulates the expression of PE13 and PPE18. Can also regulate expression of some other genes. Plays a role in modulation of innate immune responses.</text>
</comment>
<comment type="disruption phenotype">
    <text evidence="2">Disruption of the gene reduces the expression of PE13 and PPE18. It allows mice to survive for significant longer, with substantially reduced lung pathology.</text>
</comment>
<comment type="similarity">
    <text evidence="3">Belongs to the ROK (NagC/XylR) family.</text>
</comment>
<protein>
    <recommendedName>
        <fullName evidence="3">Transcriptional regulator Rv0485</fullName>
    </recommendedName>
</protein>
<reference key="1">
    <citation type="journal article" date="1998" name="Nature">
        <title>Deciphering the biology of Mycobacterium tuberculosis from the complete genome sequence.</title>
        <authorList>
            <person name="Cole S.T."/>
            <person name="Brosch R."/>
            <person name="Parkhill J."/>
            <person name="Garnier T."/>
            <person name="Churcher C.M."/>
            <person name="Harris D.E."/>
            <person name="Gordon S.V."/>
            <person name="Eiglmeier K."/>
            <person name="Gas S."/>
            <person name="Barry C.E. III"/>
            <person name="Tekaia F."/>
            <person name="Badcock K."/>
            <person name="Basham D."/>
            <person name="Brown D."/>
            <person name="Chillingworth T."/>
            <person name="Connor R."/>
            <person name="Davies R.M."/>
            <person name="Devlin K."/>
            <person name="Feltwell T."/>
            <person name="Gentles S."/>
            <person name="Hamlin N."/>
            <person name="Holroyd S."/>
            <person name="Hornsby T."/>
            <person name="Jagels K."/>
            <person name="Krogh A."/>
            <person name="McLean J."/>
            <person name="Moule S."/>
            <person name="Murphy L.D."/>
            <person name="Oliver S."/>
            <person name="Osborne J."/>
            <person name="Quail M.A."/>
            <person name="Rajandream M.A."/>
            <person name="Rogers J."/>
            <person name="Rutter S."/>
            <person name="Seeger K."/>
            <person name="Skelton S."/>
            <person name="Squares S."/>
            <person name="Squares R."/>
            <person name="Sulston J.E."/>
            <person name="Taylor K."/>
            <person name="Whitehead S."/>
            <person name="Barrell B.G."/>
        </authorList>
    </citation>
    <scope>NUCLEOTIDE SEQUENCE [LARGE SCALE GENOMIC DNA]</scope>
    <source>
        <strain>ATCC 25618 / H37Rv</strain>
    </source>
</reference>
<reference key="2">
    <citation type="journal article" date="2009" name="Infect. Immun.">
        <title>The transcriptional regulator Rv0485 modulates the expression of a pe and ppe gene pair and is required for Mycobacterium tuberculosis virulence.</title>
        <authorList>
            <person name="Goldstone R.M."/>
            <person name="Goonesekera S.D."/>
            <person name="Bloom B.R."/>
            <person name="Sampson S.L."/>
        </authorList>
    </citation>
    <scope>FUNCTION</scope>
    <scope>DISRUPTION PHENOTYPE</scope>
    <source>
        <strain>H37Rv</strain>
    </source>
</reference>
<reference key="3">
    <citation type="journal article" date="2011" name="Mol. Cell. Proteomics">
        <title>Proteogenomic analysis of Mycobacterium tuberculosis by high resolution mass spectrometry.</title>
        <authorList>
            <person name="Kelkar D.S."/>
            <person name="Kumar D."/>
            <person name="Kumar P."/>
            <person name="Balakrishnan L."/>
            <person name="Muthusamy B."/>
            <person name="Yadav A.K."/>
            <person name="Shrivastava P."/>
            <person name="Marimuthu A."/>
            <person name="Anand S."/>
            <person name="Sundaram H."/>
            <person name="Kingsbury R."/>
            <person name="Harsha H.C."/>
            <person name="Nair B."/>
            <person name="Prasad T.S."/>
            <person name="Chauhan D.S."/>
            <person name="Katoch K."/>
            <person name="Katoch V.M."/>
            <person name="Kumar P."/>
            <person name="Chaerkady R."/>
            <person name="Ramachandran S."/>
            <person name="Dash D."/>
            <person name="Pandey A."/>
        </authorList>
    </citation>
    <scope>IDENTIFICATION BY MASS SPECTROMETRY [LARGE SCALE ANALYSIS]</scope>
    <source>
        <strain>ATCC 25618 / H37Rv</strain>
    </source>
</reference>
<feature type="chain" id="PRO_0000103687" description="Transcriptional regulator Rv0485">
    <location>
        <begin position="1"/>
        <end position="438"/>
    </location>
</feature>
<feature type="DNA-binding region" description="H-T-H motif" evidence="4">
    <location>
        <begin position="52"/>
        <end position="73"/>
    </location>
</feature>
<feature type="region of interest" description="Disordered" evidence="1">
    <location>
        <begin position="1"/>
        <end position="22"/>
    </location>
</feature>
<feature type="compositionally biased region" description="Polar residues" evidence="1">
    <location>
        <begin position="1"/>
        <end position="12"/>
    </location>
</feature>
<accession>P9WKV1</accession>
<accession>L0T5I1</accession>
<accession>P64705</accession>
<accession>Q11151</accession>
<gene>
    <name type="ordered locus">Rv0485</name>
    <name type="ORF">MTCY20G9.11</name>
</gene>
<proteinExistence type="evidence at protein level"/>
<name>Y485_MYCTU</name>
<sequence>MYSTNRTSQSLSRKPGRKHQLRSHRYVMPPSLHLSDSAAASVFRAVRLRGPVGRDVIAGSTSLSIATVNRQVIALLEAGLLRERADLAVSGAIGRPRVPVEVNHEPFVTLGIHIGARTTSIVATDLFGRTLDTVETPTPRNAAGAALTSLADSADRYLQRWRRRRALWVGVTLGGAVDSATGHVDHPRLGWRQAPVGPVLADALGLPVSVASHVDAMAGAELMLGMRRFAPSSSTSLYVYARETVGYALMIGGRVHCPASGPGTIAPLPVHSEMLGGTGQLESTVSDEAVLAAARRLRIIPGIASRTRTGGSATAITDLLRVARAGNQQAKELLAERARVLGGAVALLRDLLNPDEVVVGGQAFTEYPEAMEQVEAAFTAGSVLAPRDIRVTVFGNRVQEAGAGIVSLSGLYADPLGALRRSGALDARLQDTAPEALA</sequence>
<organism>
    <name type="scientific">Mycobacterium tuberculosis (strain ATCC 25618 / H37Rv)</name>
    <dbReference type="NCBI Taxonomy" id="83332"/>
    <lineage>
        <taxon>Bacteria</taxon>
        <taxon>Bacillati</taxon>
        <taxon>Actinomycetota</taxon>
        <taxon>Actinomycetes</taxon>
        <taxon>Mycobacteriales</taxon>
        <taxon>Mycobacteriaceae</taxon>
        <taxon>Mycobacterium</taxon>
        <taxon>Mycobacterium tuberculosis complex</taxon>
    </lineage>
</organism>
<dbReference type="EMBL" id="AL123456">
    <property type="protein sequence ID" value="CCP43219.1"/>
    <property type="molecule type" value="Genomic_DNA"/>
</dbReference>
<dbReference type="PIR" id="H70743">
    <property type="entry name" value="H70743"/>
</dbReference>
<dbReference type="RefSeq" id="NP_214999.1">
    <property type="nucleotide sequence ID" value="NC_000962.3"/>
</dbReference>
<dbReference type="RefSeq" id="WP_003402361.1">
    <property type="nucleotide sequence ID" value="NZ_NVQJ01000002.1"/>
</dbReference>
<dbReference type="SMR" id="P9WKV1"/>
<dbReference type="STRING" id="83332.Rv0485"/>
<dbReference type="PaxDb" id="83332-Rv0485"/>
<dbReference type="DNASU" id="887170"/>
<dbReference type="GeneID" id="887170"/>
<dbReference type="KEGG" id="mtu:Rv0485"/>
<dbReference type="KEGG" id="mtv:RVBD_0485"/>
<dbReference type="TubercuList" id="Rv0485"/>
<dbReference type="eggNOG" id="COG1940">
    <property type="taxonomic scope" value="Bacteria"/>
</dbReference>
<dbReference type="InParanoid" id="P9WKV1"/>
<dbReference type="OrthoDB" id="3605644at2"/>
<dbReference type="PhylomeDB" id="P9WKV1"/>
<dbReference type="Proteomes" id="UP000001584">
    <property type="component" value="Chromosome"/>
</dbReference>
<dbReference type="GO" id="GO:0003677">
    <property type="term" value="F:DNA binding"/>
    <property type="evidence" value="ECO:0007669"/>
    <property type="project" value="UniProtKB-KW"/>
</dbReference>
<dbReference type="GO" id="GO:0010468">
    <property type="term" value="P:regulation of gene expression"/>
    <property type="evidence" value="ECO:0000314"/>
    <property type="project" value="MTBBASE"/>
</dbReference>
<dbReference type="FunFam" id="3.30.420.40:FF:000330">
    <property type="entry name" value="Transcriptional regulator MT0503"/>
    <property type="match status" value="1"/>
</dbReference>
<dbReference type="Gene3D" id="3.30.420.40">
    <property type="match status" value="2"/>
</dbReference>
<dbReference type="Gene3D" id="1.10.10.10">
    <property type="entry name" value="Winged helix-like DNA-binding domain superfamily/Winged helix DNA-binding domain"/>
    <property type="match status" value="1"/>
</dbReference>
<dbReference type="InterPro" id="IPR043129">
    <property type="entry name" value="ATPase_NBD"/>
</dbReference>
<dbReference type="InterPro" id="IPR000600">
    <property type="entry name" value="ROK"/>
</dbReference>
<dbReference type="InterPro" id="IPR036388">
    <property type="entry name" value="WH-like_DNA-bd_sf"/>
</dbReference>
<dbReference type="InterPro" id="IPR036390">
    <property type="entry name" value="WH_DNA-bd_sf"/>
</dbReference>
<dbReference type="PANTHER" id="PTHR18964:SF149">
    <property type="entry name" value="BIFUNCTIONAL UDP-N-ACETYLGLUCOSAMINE 2-EPIMERASE_N-ACETYLMANNOSAMINE KINASE"/>
    <property type="match status" value="1"/>
</dbReference>
<dbReference type="PANTHER" id="PTHR18964">
    <property type="entry name" value="ROK (REPRESSOR, ORF, KINASE) FAMILY"/>
    <property type="match status" value="1"/>
</dbReference>
<dbReference type="Pfam" id="PF00480">
    <property type="entry name" value="ROK"/>
    <property type="match status" value="1"/>
</dbReference>
<dbReference type="SUPFAM" id="SSF53067">
    <property type="entry name" value="Actin-like ATPase domain"/>
    <property type="match status" value="1"/>
</dbReference>
<dbReference type="SUPFAM" id="SSF46785">
    <property type="entry name" value="Winged helix' DNA-binding domain"/>
    <property type="match status" value="1"/>
</dbReference>
<keyword id="KW-0010">Activator</keyword>
<keyword id="KW-0238">DNA-binding</keyword>
<keyword id="KW-1185">Reference proteome</keyword>
<keyword id="KW-0678">Repressor</keyword>
<keyword id="KW-0804">Transcription</keyword>
<keyword id="KW-0805">Transcription regulation</keyword>
<evidence type="ECO:0000256" key="1">
    <source>
        <dbReference type="SAM" id="MobiDB-lite"/>
    </source>
</evidence>
<evidence type="ECO:0000269" key="2">
    <source>
    </source>
</evidence>
<evidence type="ECO:0000305" key="3"/>
<evidence type="ECO:0000305" key="4">
    <source>
    </source>
</evidence>